<sequence length="325" mass="36033">MSSITKRDKVIIGSRKSQLAMLQTEWVRDRIQELNPGIIVEIKTMDTTGDKVLDVSLSKIGDKGLFTKELEDMMLNGTIDLAVHSLKDIPTKLPDGLKLGAITKRYNTSDAFIANAKKHGKNCKLSELPQGAMIGSSSLRRVAQLKKAYPHLQFKDIRGNLNTRFKKLEDDSNGYDGMILAVAGLERMELTDHISEIIPDSISLYAVGQGSLGIECKDGDDFIQSILNPLIHRESMYCCEAERSMLRDLEGGCHVPIGVVTKLHNQSQPDETLEINAIVLNLDGSKYIESKIIGPSIQYYQLGKSIAQDLINKGSKDILSEFIKK</sequence>
<feature type="chain" id="PRO_0000327798" description="Porphobilinogen deaminase">
    <location>
        <begin position="1"/>
        <end position="325"/>
    </location>
</feature>
<feature type="modified residue" description="S-(dipyrrolylmethanemethyl)cysteine" evidence="1">
    <location>
        <position position="253"/>
    </location>
</feature>
<reference key="1">
    <citation type="journal article" date="2005" name="Nature">
        <title>The genome of the social amoeba Dictyostelium discoideum.</title>
        <authorList>
            <person name="Eichinger L."/>
            <person name="Pachebat J.A."/>
            <person name="Gloeckner G."/>
            <person name="Rajandream M.A."/>
            <person name="Sucgang R."/>
            <person name="Berriman M."/>
            <person name="Song J."/>
            <person name="Olsen R."/>
            <person name="Szafranski K."/>
            <person name="Xu Q."/>
            <person name="Tunggal B."/>
            <person name="Kummerfeld S."/>
            <person name="Madera M."/>
            <person name="Konfortov B.A."/>
            <person name="Rivero F."/>
            <person name="Bankier A.T."/>
            <person name="Lehmann R."/>
            <person name="Hamlin N."/>
            <person name="Davies R."/>
            <person name="Gaudet P."/>
            <person name="Fey P."/>
            <person name="Pilcher K."/>
            <person name="Chen G."/>
            <person name="Saunders D."/>
            <person name="Sodergren E.J."/>
            <person name="Davis P."/>
            <person name="Kerhornou A."/>
            <person name="Nie X."/>
            <person name="Hall N."/>
            <person name="Anjard C."/>
            <person name="Hemphill L."/>
            <person name="Bason N."/>
            <person name="Farbrother P."/>
            <person name="Desany B."/>
            <person name="Just E."/>
            <person name="Morio T."/>
            <person name="Rost R."/>
            <person name="Churcher C.M."/>
            <person name="Cooper J."/>
            <person name="Haydock S."/>
            <person name="van Driessche N."/>
            <person name="Cronin A."/>
            <person name="Goodhead I."/>
            <person name="Muzny D.M."/>
            <person name="Mourier T."/>
            <person name="Pain A."/>
            <person name="Lu M."/>
            <person name="Harper D."/>
            <person name="Lindsay R."/>
            <person name="Hauser H."/>
            <person name="James K.D."/>
            <person name="Quiles M."/>
            <person name="Madan Babu M."/>
            <person name="Saito T."/>
            <person name="Buchrieser C."/>
            <person name="Wardroper A."/>
            <person name="Felder M."/>
            <person name="Thangavelu M."/>
            <person name="Johnson D."/>
            <person name="Knights A."/>
            <person name="Loulseged H."/>
            <person name="Mungall K.L."/>
            <person name="Oliver K."/>
            <person name="Price C."/>
            <person name="Quail M.A."/>
            <person name="Urushihara H."/>
            <person name="Hernandez J."/>
            <person name="Rabbinowitsch E."/>
            <person name="Steffen D."/>
            <person name="Sanders M."/>
            <person name="Ma J."/>
            <person name="Kohara Y."/>
            <person name="Sharp S."/>
            <person name="Simmonds M.N."/>
            <person name="Spiegler S."/>
            <person name="Tivey A."/>
            <person name="Sugano S."/>
            <person name="White B."/>
            <person name="Walker D."/>
            <person name="Woodward J.R."/>
            <person name="Winckler T."/>
            <person name="Tanaka Y."/>
            <person name="Shaulsky G."/>
            <person name="Schleicher M."/>
            <person name="Weinstock G.M."/>
            <person name="Rosenthal A."/>
            <person name="Cox E.C."/>
            <person name="Chisholm R.L."/>
            <person name="Gibbs R.A."/>
            <person name="Loomis W.F."/>
            <person name="Platzer M."/>
            <person name="Kay R.R."/>
            <person name="Williams J.G."/>
            <person name="Dear P.H."/>
            <person name="Noegel A.A."/>
            <person name="Barrell B.G."/>
            <person name="Kuspa A."/>
        </authorList>
    </citation>
    <scope>NUCLEOTIDE SEQUENCE [LARGE SCALE GENOMIC DNA]</scope>
    <source>
        <strain>AX4</strain>
    </source>
</reference>
<evidence type="ECO:0000250" key="1"/>
<evidence type="ECO:0000305" key="2"/>
<gene>
    <name type="primary">hemC</name>
    <name type="ORF">DDB_G0284697</name>
</gene>
<name>HEM3_DICDI</name>
<proteinExistence type="inferred from homology"/>
<protein>
    <recommendedName>
        <fullName>Porphobilinogen deaminase</fullName>
        <ecNumber>2.5.1.61</ecNumber>
    </recommendedName>
    <alternativeName>
        <fullName>Heme biosynthesis protein C</fullName>
    </alternativeName>
    <alternativeName>
        <fullName>Hydroxymethylbilane synthase</fullName>
        <shortName>HMBS</shortName>
    </alternativeName>
</protein>
<accession>Q54P93</accession>
<dbReference type="EC" id="2.5.1.61"/>
<dbReference type="EMBL" id="AAFI02000070">
    <property type="protein sequence ID" value="EAL65118.1"/>
    <property type="molecule type" value="Genomic_DNA"/>
</dbReference>
<dbReference type="RefSeq" id="XP_638482.1">
    <property type="nucleotide sequence ID" value="XM_633390.1"/>
</dbReference>
<dbReference type="SMR" id="Q54P93"/>
<dbReference type="FunCoup" id="Q54P93">
    <property type="interactions" value="259"/>
</dbReference>
<dbReference type="STRING" id="44689.Q54P93"/>
<dbReference type="PaxDb" id="44689-DDB0231417"/>
<dbReference type="EnsemblProtists" id="EAL65118">
    <property type="protein sequence ID" value="EAL65118"/>
    <property type="gene ID" value="DDB_G0284697"/>
</dbReference>
<dbReference type="GeneID" id="8624733"/>
<dbReference type="KEGG" id="ddi:DDB_G0284697"/>
<dbReference type="dictyBase" id="DDB_G0284697">
    <property type="gene designation" value="hemC"/>
</dbReference>
<dbReference type="VEuPathDB" id="AmoebaDB:DDB_G0284697"/>
<dbReference type="eggNOG" id="KOG2892">
    <property type="taxonomic scope" value="Eukaryota"/>
</dbReference>
<dbReference type="HOGENOM" id="CLU_019704_0_2_1"/>
<dbReference type="InParanoid" id="Q54P93"/>
<dbReference type="OMA" id="LWQANHI"/>
<dbReference type="PhylomeDB" id="Q54P93"/>
<dbReference type="UniPathway" id="UPA00251">
    <property type="reaction ID" value="UER00319"/>
</dbReference>
<dbReference type="PRO" id="PR:Q54P93"/>
<dbReference type="Proteomes" id="UP000002195">
    <property type="component" value="Chromosome 4"/>
</dbReference>
<dbReference type="GO" id="GO:0005737">
    <property type="term" value="C:cytoplasm"/>
    <property type="evidence" value="ECO:0000318"/>
    <property type="project" value="GO_Central"/>
</dbReference>
<dbReference type="GO" id="GO:0004418">
    <property type="term" value="F:hydroxymethylbilane synthase activity"/>
    <property type="evidence" value="ECO:0000250"/>
    <property type="project" value="UniProtKB"/>
</dbReference>
<dbReference type="GO" id="GO:0006783">
    <property type="term" value="P:heme biosynthetic process"/>
    <property type="evidence" value="ECO:0000250"/>
    <property type="project" value="UniProtKB"/>
</dbReference>
<dbReference type="GO" id="GO:0006782">
    <property type="term" value="P:protoporphyrinogen IX biosynthetic process"/>
    <property type="evidence" value="ECO:0007669"/>
    <property type="project" value="UniProtKB-UniPathway"/>
</dbReference>
<dbReference type="CDD" id="cd13645">
    <property type="entry name" value="PBP2_HuPBGD_like"/>
    <property type="match status" value="1"/>
</dbReference>
<dbReference type="FunFam" id="3.30.160.40:FF:000002">
    <property type="entry name" value="Porphobilinogen deaminase"/>
    <property type="match status" value="1"/>
</dbReference>
<dbReference type="FunFam" id="3.40.190.10:FF:000004">
    <property type="entry name" value="Porphobilinogen deaminase"/>
    <property type="match status" value="1"/>
</dbReference>
<dbReference type="FunFam" id="3.40.190.10:FF:000005">
    <property type="entry name" value="Porphobilinogen deaminase"/>
    <property type="match status" value="1"/>
</dbReference>
<dbReference type="Gene3D" id="3.40.190.10">
    <property type="entry name" value="Periplasmic binding protein-like II"/>
    <property type="match status" value="2"/>
</dbReference>
<dbReference type="Gene3D" id="3.30.160.40">
    <property type="entry name" value="Porphobilinogen deaminase, C-terminal domain"/>
    <property type="match status" value="1"/>
</dbReference>
<dbReference type="HAMAP" id="MF_00260">
    <property type="entry name" value="Porphobil_deam"/>
    <property type="match status" value="1"/>
</dbReference>
<dbReference type="InterPro" id="IPR000860">
    <property type="entry name" value="HemC"/>
</dbReference>
<dbReference type="InterPro" id="IPR022419">
    <property type="entry name" value="Porphobilin_deaminase_cofac_BS"/>
</dbReference>
<dbReference type="InterPro" id="IPR022417">
    <property type="entry name" value="Porphobilin_deaminase_N"/>
</dbReference>
<dbReference type="InterPro" id="IPR022418">
    <property type="entry name" value="Porphobilinogen_deaminase_C"/>
</dbReference>
<dbReference type="InterPro" id="IPR036803">
    <property type="entry name" value="Porphobilinogen_deaminase_C_sf"/>
</dbReference>
<dbReference type="NCBIfam" id="TIGR00212">
    <property type="entry name" value="hemC"/>
    <property type="match status" value="1"/>
</dbReference>
<dbReference type="PANTHER" id="PTHR11557">
    <property type="entry name" value="PORPHOBILINOGEN DEAMINASE"/>
    <property type="match status" value="1"/>
</dbReference>
<dbReference type="PANTHER" id="PTHR11557:SF0">
    <property type="entry name" value="PORPHOBILINOGEN DEAMINASE"/>
    <property type="match status" value="1"/>
</dbReference>
<dbReference type="Pfam" id="PF01379">
    <property type="entry name" value="Porphobil_deam"/>
    <property type="match status" value="1"/>
</dbReference>
<dbReference type="Pfam" id="PF03900">
    <property type="entry name" value="Porphobil_deamC"/>
    <property type="match status" value="1"/>
</dbReference>
<dbReference type="PIRSF" id="PIRSF001438">
    <property type="entry name" value="4pyrrol_synth_OHMeBilane_synth"/>
    <property type="match status" value="1"/>
</dbReference>
<dbReference type="PRINTS" id="PR00151">
    <property type="entry name" value="PORPHBDMNASE"/>
</dbReference>
<dbReference type="SUPFAM" id="SSF53850">
    <property type="entry name" value="Periplasmic binding protein-like II"/>
    <property type="match status" value="1"/>
</dbReference>
<dbReference type="SUPFAM" id="SSF54782">
    <property type="entry name" value="Porphobilinogen deaminase (hydroxymethylbilane synthase), C-terminal domain"/>
    <property type="match status" value="1"/>
</dbReference>
<dbReference type="PROSITE" id="PS00533">
    <property type="entry name" value="PORPHOBILINOGEN_DEAM"/>
    <property type="match status" value="1"/>
</dbReference>
<organism>
    <name type="scientific">Dictyostelium discoideum</name>
    <name type="common">Social amoeba</name>
    <dbReference type="NCBI Taxonomy" id="44689"/>
    <lineage>
        <taxon>Eukaryota</taxon>
        <taxon>Amoebozoa</taxon>
        <taxon>Evosea</taxon>
        <taxon>Eumycetozoa</taxon>
        <taxon>Dictyostelia</taxon>
        <taxon>Dictyosteliales</taxon>
        <taxon>Dictyosteliaceae</taxon>
        <taxon>Dictyostelium</taxon>
    </lineage>
</organism>
<keyword id="KW-0350">Heme biosynthesis</keyword>
<keyword id="KW-0627">Porphyrin biosynthesis</keyword>
<keyword id="KW-1185">Reference proteome</keyword>
<keyword id="KW-0808">Transferase</keyword>
<comment type="function">
    <text evidence="1">Tetrapolymerization of the monopyrrole PBG into the hydroxymethylbilane pre-uroporphyrinogen in several discrete steps.</text>
</comment>
<comment type="catalytic activity">
    <reaction>
        <text>4 porphobilinogen + H2O = hydroxymethylbilane + 4 NH4(+)</text>
        <dbReference type="Rhea" id="RHEA:13185"/>
        <dbReference type="ChEBI" id="CHEBI:15377"/>
        <dbReference type="ChEBI" id="CHEBI:28938"/>
        <dbReference type="ChEBI" id="CHEBI:57845"/>
        <dbReference type="ChEBI" id="CHEBI:58126"/>
        <dbReference type="EC" id="2.5.1.61"/>
    </reaction>
</comment>
<comment type="cofactor">
    <cofactor evidence="1">
        <name>dipyrromethane</name>
        <dbReference type="ChEBI" id="CHEBI:60342"/>
    </cofactor>
    <text evidence="1">Binds 1 dipyrromethane group covalently.</text>
</comment>
<comment type="pathway">
    <text>Porphyrin-containing compound metabolism; protoporphyrin-IX biosynthesis; coproporphyrinogen-III from 5-aminolevulinate: step 2/4.</text>
</comment>
<comment type="miscellaneous">
    <text evidence="1">The porphobilinogen subunits are added to the dipyrromethane group.</text>
</comment>
<comment type="similarity">
    <text evidence="2">Belongs to the HMBS family.</text>
</comment>